<sequence length="504" mass="59957">MEKLQGHRELDRSWQHNFFYPLIFQEYIYVFAYDHALNKLILLENAIDKKYSLLIVKRLITRMYQQNHFILSVNDSNQNEIFGHKHKKNLYSQMITEGFAVIVEIPFSLLLISSLEGKEIVESQNLRSIHSIFPFLEDKFLHLNYVLDILIPYPAHLEILVQTLRYWLKDASSLHLLRYFLYEYRNWNSLIRPKESISPFSKRNRRFFLFLYNLLVYEYESIFVILRKQSSYLRSTSFGALLERIHFYGKIKYLVKVKVKVFGVILWLFKEPFLHYVRYQGKCLLASKGTSFLMYKWKYYFIAFWQCHFSVWSQPRRIYINQLSNYSLDFMGFISNVGLNSSVIRSQMLENSFLVDNIIKKFDTIVPIIPLVGSLAKAKFCNGLRHPISKSGWTDLSDADIIDRFGRICRNLSHYYSGSSRKKSLYRIKYILRLSCARTLSRKHKSTVRAFLKRLGSEFLEEFFTEEDKVLSLILPRDSSSSGFYRGRVWYLDIICIHNLANDE</sequence>
<feature type="chain" id="PRO_0000143224" description="Maturase K">
    <location>
        <begin position="1"/>
        <end position="504"/>
    </location>
</feature>
<geneLocation type="chloroplast"/>
<organism>
    <name type="scientific">Amaranthus caudatus</name>
    <name type="common">Love-lies-bleeding</name>
    <name type="synonym">Inca-wheat</name>
    <dbReference type="NCBI Taxonomy" id="3567"/>
    <lineage>
        <taxon>Eukaryota</taxon>
        <taxon>Viridiplantae</taxon>
        <taxon>Streptophyta</taxon>
        <taxon>Embryophyta</taxon>
        <taxon>Tracheophyta</taxon>
        <taxon>Spermatophyta</taxon>
        <taxon>Magnoliopsida</taxon>
        <taxon>eudicotyledons</taxon>
        <taxon>Gunneridae</taxon>
        <taxon>Pentapetalae</taxon>
        <taxon>Caryophyllales</taxon>
        <taxon>Amaranthaceae</taxon>
        <taxon>Amaranthus</taxon>
    </lineage>
</organism>
<proteinExistence type="inferred from homology"/>
<protein>
    <recommendedName>
        <fullName evidence="1">Maturase K</fullName>
    </recommendedName>
    <alternativeName>
        <fullName evidence="1">Intron maturase</fullName>
    </alternativeName>
</protein>
<name>MATK_AMACA</name>
<comment type="function">
    <text evidence="1">Usually encoded in the trnK tRNA gene intron. Probably assists in splicing its own and other chloroplast group II introns.</text>
</comment>
<comment type="subcellular location">
    <subcellularLocation>
        <location>Plastid</location>
        <location>Chloroplast</location>
    </subcellularLocation>
</comment>
<comment type="similarity">
    <text evidence="1">Belongs to the intron maturase 2 family. MatK subfamily.</text>
</comment>
<dbReference type="EMBL" id="AY514809">
    <property type="protein sequence ID" value="AAT28239.1"/>
    <property type="molecule type" value="Genomic_DNA"/>
</dbReference>
<dbReference type="GO" id="GO:0009507">
    <property type="term" value="C:chloroplast"/>
    <property type="evidence" value="ECO:0007669"/>
    <property type="project" value="UniProtKB-SubCell"/>
</dbReference>
<dbReference type="GO" id="GO:0003723">
    <property type="term" value="F:RNA binding"/>
    <property type="evidence" value="ECO:0007669"/>
    <property type="project" value="UniProtKB-KW"/>
</dbReference>
<dbReference type="GO" id="GO:0006397">
    <property type="term" value="P:mRNA processing"/>
    <property type="evidence" value="ECO:0007669"/>
    <property type="project" value="UniProtKB-KW"/>
</dbReference>
<dbReference type="GO" id="GO:0008380">
    <property type="term" value="P:RNA splicing"/>
    <property type="evidence" value="ECO:0007669"/>
    <property type="project" value="UniProtKB-UniRule"/>
</dbReference>
<dbReference type="GO" id="GO:0008033">
    <property type="term" value="P:tRNA processing"/>
    <property type="evidence" value="ECO:0007669"/>
    <property type="project" value="UniProtKB-KW"/>
</dbReference>
<dbReference type="HAMAP" id="MF_01390">
    <property type="entry name" value="MatK"/>
    <property type="match status" value="1"/>
</dbReference>
<dbReference type="InterPro" id="IPR024937">
    <property type="entry name" value="Domain_X"/>
</dbReference>
<dbReference type="InterPro" id="IPR002866">
    <property type="entry name" value="Maturase_MatK"/>
</dbReference>
<dbReference type="InterPro" id="IPR024942">
    <property type="entry name" value="Maturase_MatK_N"/>
</dbReference>
<dbReference type="PANTHER" id="PTHR34811">
    <property type="entry name" value="MATURASE K"/>
    <property type="match status" value="1"/>
</dbReference>
<dbReference type="PANTHER" id="PTHR34811:SF1">
    <property type="entry name" value="MATURASE K"/>
    <property type="match status" value="1"/>
</dbReference>
<dbReference type="Pfam" id="PF01348">
    <property type="entry name" value="Intron_maturas2"/>
    <property type="match status" value="1"/>
</dbReference>
<dbReference type="Pfam" id="PF01824">
    <property type="entry name" value="MatK_N"/>
    <property type="match status" value="1"/>
</dbReference>
<gene>
    <name evidence="1" type="primary">matK</name>
</gene>
<keyword id="KW-0150">Chloroplast</keyword>
<keyword id="KW-0507">mRNA processing</keyword>
<keyword id="KW-0934">Plastid</keyword>
<keyword id="KW-0694">RNA-binding</keyword>
<keyword id="KW-0819">tRNA processing</keyword>
<accession>Q5J2Z9</accession>
<evidence type="ECO:0000255" key="1">
    <source>
        <dbReference type="HAMAP-Rule" id="MF_01390"/>
    </source>
</evidence>
<reference key="1">
    <citation type="journal article" date="2005" name="Ann. Mo. Bot. Gard.">
        <title>Phylogenetics of Amaranthaceae based on matK/trnK sequence data -- evidence from parsimony, likelihood, and Bayesian analyses.</title>
        <authorList>
            <person name="Mueller K.F."/>
            <person name="Borsch T."/>
        </authorList>
    </citation>
    <scope>NUCLEOTIDE SEQUENCE [GENOMIC DNA]</scope>
</reference>